<accession>P59634</accession>
<accession>Q7T6R9</accession>
<accession>Q7TA25</accession>
<accession>Q7TFA7</accession>
<accession>Q80BV3</accession>
<comment type="function">
    <text evidence="3 6">Disrupts bidirectional nucleocytoplasmic transport by interacting with host RAE1-NUP98 complex (PubMed:33849972). Disrupts cell nuclear import complex formation also by tethering karyopherin alpha 2 and karyopherin beta 1 to the membrane (PubMed:17596301). Retention of import factors at the ER/Golgi membrane leads to a loss of transport into the nucleus (PubMed:17596301). Thereby prevents STAT1 nuclear translocation in response to interferon signaling, thus blocking the expression of interferon stimulated genes (ISGs) that display multiple antiviral activities (PubMed:17596301).</text>
</comment>
<comment type="subunit">
    <text evidence="2 3 5 6 7">May interact with nsp8 (PubMed:17532020). Interacts with protein ORF9b (PubMed:22820404). Interacts with host RAE1 in NUP98-RAE1 complex (PubMed:35096974); the interaction disrupts the host nuclear import (PubMed:33849972). Interacts with host KPNA2 (PubMed:17596301).</text>
</comment>
<comment type="interaction">
    <interactant intactId="EBI-25489038">
        <id>P59634</id>
    </interactant>
    <interactant intactId="EBI-715074">
        <id>Q13561</id>
        <label>DCTN2</label>
    </interactant>
    <organismsDiffer>true</organismsDiffer>
    <experiments>2</experiments>
</comment>
<comment type="interaction">
    <interactant intactId="EBI-25489038">
        <id>P59634</id>
    </interactant>
    <interactant intactId="EBI-2866234">
        <id>Q92617</id>
        <label>NPIPB3</label>
    </interactant>
    <organismsDiffer>true</organismsDiffer>
    <experiments>3</experiments>
</comment>
<comment type="interaction">
    <interactant intactId="EBI-25489038">
        <id>P59634</id>
    </interactant>
    <interactant intactId="EBI-295727">
        <id>P52948</id>
        <label>NUP98</label>
    </interactant>
    <organismsDiffer>true</organismsDiffer>
    <experiments>6</experiments>
</comment>
<comment type="subcellular location">
    <subcellularLocation>
        <location evidence="1 2 3">Host endoplasmic reticulum membrane</location>
    </subcellularLocation>
    <subcellularLocation>
        <location evidence="1 3">Host Golgi apparatus membrane</location>
    </subcellularLocation>
    <subcellularLocation>
        <location evidence="5">Host cytoplasm</location>
    </subcellularLocation>
    <text evidence="1 3 4">Localizes to virus-induced vesicular structures called double membrane vesicles.</text>
</comment>
<comment type="similarity">
    <text evidence="8">Belongs to the coronaviruses accessory protein 6 family.</text>
</comment>
<proteinExistence type="evidence at protein level"/>
<organismHost>
    <name type="scientific">Homo sapiens</name>
    <name type="common">Human</name>
    <dbReference type="NCBI Taxonomy" id="9606"/>
</organismHost>
<organismHost>
    <name type="scientific">Paguma larvata</name>
    <name type="common">Masked palm civet</name>
    <dbReference type="NCBI Taxonomy" id="9675"/>
</organismHost>
<sequence>MFHLVDFQVTIAEILIIIMRTFRIAIWNLDVIISSIVRQLFKPLTKKNYSELDDEEPMELDYP</sequence>
<reference key="1">
    <citation type="journal article" date="2003" name="Science">
        <title>Characterization of a novel coronavirus associated with severe acute respiratory syndrome.</title>
        <authorList>
            <person name="Rota P.A."/>
            <person name="Oberste M.S."/>
            <person name="Monroe S.S."/>
            <person name="Nix W.A."/>
            <person name="Campagnoli R."/>
            <person name="Icenogle J.P."/>
            <person name="Penaranda S."/>
            <person name="Bankamp B."/>
            <person name="Maher K."/>
            <person name="Chen M.-H."/>
            <person name="Tong S."/>
            <person name="Tamin A."/>
            <person name="Lowe L."/>
            <person name="Frace M."/>
            <person name="DeRisi J.L."/>
            <person name="Chen Q."/>
            <person name="Wang D."/>
            <person name="Erdman D.D."/>
            <person name="Peret T.C.T."/>
            <person name="Burns C."/>
            <person name="Ksiazek T.G."/>
            <person name="Rollin P.E."/>
            <person name="Sanchez A."/>
            <person name="Liffick S."/>
            <person name="Holloway B."/>
            <person name="Limor J."/>
            <person name="McCaustland K."/>
            <person name="Olsen-Rasmussen M."/>
            <person name="Fouchier R."/>
            <person name="Guenther S."/>
            <person name="Osterhaus A.D.M.E."/>
            <person name="Drosten C."/>
            <person name="Pallansch M.A."/>
            <person name="Anderson L.J."/>
            <person name="Bellini W.J."/>
        </authorList>
    </citation>
    <scope>NUCLEOTIDE SEQUENCE [GENOMIC RNA]</scope>
    <source>
        <strain>Isolate Urbani</strain>
    </source>
</reference>
<reference key="2">
    <citation type="journal article" date="2003" name="Science">
        <title>The genome sequence of the SARS-associated coronavirus.</title>
        <authorList>
            <person name="Marra M.A."/>
            <person name="Jones S.J.M."/>
            <person name="Astell C.R."/>
            <person name="Holt R.A."/>
            <person name="Brooks-Wilson A."/>
            <person name="Butterfield Y.S.N."/>
            <person name="Khattra J."/>
            <person name="Asano J.K."/>
            <person name="Barber S.A."/>
            <person name="Chan S.Y."/>
            <person name="Cloutier A."/>
            <person name="Coughlin S.M."/>
            <person name="Freeman D."/>
            <person name="Girn N."/>
            <person name="Griffith O.L."/>
            <person name="Leach S.R."/>
            <person name="Mayo M."/>
            <person name="McDonald H."/>
            <person name="Montgomery S.B."/>
            <person name="Pandoh P.K."/>
            <person name="Petrescu A.S."/>
            <person name="Robertson A.G."/>
            <person name="Schein J.E."/>
            <person name="Siddiqui A."/>
            <person name="Smailus D.E."/>
            <person name="Stott J.M."/>
            <person name="Yang G.S."/>
            <person name="Plummer F."/>
            <person name="Andonov A."/>
            <person name="Artsob H."/>
            <person name="Bastien N."/>
            <person name="Bernard K."/>
            <person name="Booth T.F."/>
            <person name="Bowness D."/>
            <person name="Czub M."/>
            <person name="Drebot M."/>
            <person name="Fernando L."/>
            <person name="Flick R."/>
            <person name="Garbutt M."/>
            <person name="Gray M."/>
            <person name="Grolla A."/>
            <person name="Jones S."/>
            <person name="Feldmann H."/>
            <person name="Meyers A."/>
            <person name="Kabani A."/>
            <person name="Li Y."/>
            <person name="Normand S."/>
            <person name="Stroher U."/>
            <person name="Tipples G.A."/>
            <person name="Tyler S."/>
            <person name="Vogrig R."/>
            <person name="Ward D."/>
            <person name="Watson B."/>
            <person name="Brunham R.C."/>
            <person name="Krajden M."/>
            <person name="Petric M."/>
            <person name="Skowronski D.M."/>
            <person name="Upton C."/>
            <person name="Roper R.L."/>
        </authorList>
    </citation>
    <scope>NUCLEOTIDE SEQUENCE [GENOMIC RNA]</scope>
    <source>
        <strain>Isolate Tor2</strain>
    </source>
</reference>
<reference key="3">
    <citation type="journal article" date="2003" name="N. Engl. J. Med.">
        <title>Coronavirus genomic-sequence variations and the epidemiology of the severe acute respiratory syndrome.</title>
        <authorList>
            <person name="Tsui S.K.W."/>
            <person name="Chim S.S.C."/>
            <person name="Lo Y.M.D."/>
        </authorList>
    </citation>
    <scope>NUCLEOTIDE SEQUENCE [GENOMIC RNA]</scope>
    <source>
        <strain>Isolate CUHK-Su10</strain>
        <strain>Isolate CUHK-W1</strain>
    </source>
</reference>
<reference key="4">
    <citation type="journal article" date="2003" name="Exp. Biol. Med.">
        <title>The complete genome sequence of severe acute respiratory syndrome coronavirus strain HKU-39849 (HK-39).</title>
        <authorList>
            <person name="Zeng F.Y."/>
            <person name="Chan C.W."/>
            <person name="Chan M.N."/>
            <person name="Chen J.D."/>
            <person name="Chow K.Y.C."/>
            <person name="Hon C.C.C."/>
            <person name="Hui R.K.H."/>
            <person name="Li J."/>
            <person name="Li V.Y.Y."/>
            <person name="Wang C.Y."/>
            <person name="Wang P.Y."/>
            <person name="Guan Y."/>
            <person name="Zheng B."/>
            <person name="Poon L.L.M."/>
            <person name="Chan K.H."/>
            <person name="Yuen K.Y."/>
            <person name="Peiris J.S.M."/>
            <person name="Leung F.C."/>
        </authorList>
    </citation>
    <scope>NUCLEOTIDE SEQUENCE [GENOMIC RNA]</scope>
    <source>
        <strain>Isolate HKU-39849</strain>
    </source>
</reference>
<reference key="5">
    <citation type="submission" date="2003-04" db="EMBL/GenBank/DDBJ databases">
        <authorList>
            <person name="Qin E."/>
            <person name="Zhu Q."/>
            <person name="Yu M."/>
            <person name="Fan B."/>
            <person name="Chang G."/>
            <person name="Si B."/>
            <person name="Yang B."/>
            <person name="Peng W."/>
            <person name="Jiang T."/>
            <person name="Liu B."/>
            <person name="Deng Y."/>
            <person name="Liu H."/>
            <person name="Zhang Y."/>
            <person name="Wang C."/>
            <person name="Li Y."/>
            <person name="Gan Y."/>
            <person name="Li X."/>
            <person name="Lu F."/>
            <person name="Tan G."/>
            <person name="Yang R."/>
            <person name="Cao W.S."/>
            <person name="Wang J."/>
            <person name="Chen W."/>
            <person name="Cong L."/>
            <person name="Deng Y."/>
            <person name="Dong W."/>
            <person name="Han Y."/>
            <person name="Hu W."/>
            <person name="Lei M."/>
            <person name="Li C."/>
            <person name="Li G."/>
            <person name="Li G."/>
            <person name="Li H."/>
            <person name="Li S."/>
            <person name="Li S."/>
            <person name="Li W."/>
            <person name="Li W."/>
            <person name="Lin W."/>
            <person name="Liu J."/>
            <person name="Liu Z."/>
            <person name="Lu H."/>
            <person name="Ni P."/>
            <person name="Qi Q."/>
            <person name="Sun Y."/>
            <person name="Tang L."/>
            <person name="Tong Z."/>
            <person name="Wang J."/>
            <person name="Wang X."/>
            <person name="Wu Q."/>
            <person name="Xi Y."/>
            <person name="Xu Z."/>
            <person name="Yang L."/>
            <person name="Ye C."/>
            <person name="Ye J."/>
            <person name="Zhang B."/>
            <person name="Zhang F."/>
            <person name="Zhang J."/>
            <person name="Zhang X."/>
            <person name="Zhou J."/>
            <person name="Yang H."/>
        </authorList>
    </citation>
    <scope>NUCLEOTIDE SEQUENCE [GENOMIC RNA]</scope>
    <source>
        <strain>Isolate BJ01</strain>
        <strain>Isolate BJ02</strain>
        <strain>Isolate BJ03</strain>
        <strain>Isolate BJ04</strain>
        <strain>Isolate GD01</strain>
    </source>
</reference>
<reference key="6">
    <citation type="submission" date="2003-05" db="EMBL/GenBank/DDBJ databases">
        <title>The complete genome of SARS coronavirus clone TW1.</title>
        <authorList>
            <person name="Yeh S.-H."/>
            <person name="Kao C.-L."/>
            <person name="Tsai C.-Y."/>
            <person name="Liu C.-J."/>
            <person name="Chen D.-S."/>
            <person name="Chen P.-J."/>
        </authorList>
    </citation>
    <scope>NUCLEOTIDE SEQUENCE [GENOMIC RNA]</scope>
    <source>
        <strain>Isolate TW1</strain>
    </source>
</reference>
<reference key="7">
    <citation type="submission" date="2003-05" db="EMBL/GenBank/DDBJ databases">
        <title>SARS virus is a close relative of type II coronaviruses.</title>
        <authorList>
            <person name="Eickmann M."/>
            <person name="Becker S."/>
            <person name="Klenk H.-D."/>
            <person name="Doerr H.W."/>
            <person name="Stadler K."/>
            <person name="Censini S."/>
            <person name="Guidotti S."/>
            <person name="Masignani V."/>
            <person name="Scarselli M."/>
            <person name="Mora M."/>
            <person name="Donati C."/>
            <person name="Han J."/>
            <person name="Song H.C."/>
            <person name="Abrignani S."/>
            <person name="Covacci A."/>
            <person name="Rappuoli R."/>
        </authorList>
    </citation>
    <scope>NUCLEOTIDE SEQUENCE [GENOMIC RNA]</scope>
    <source>
        <strain>Isolate FRA</strain>
    </source>
</reference>
<reference key="8">
    <citation type="submission" date="2003-05" db="EMBL/GenBank/DDBJ databases">
        <authorList>
            <person name="Thiel V."/>
            <person name="Hertzig T."/>
            <person name="Putics A."/>
            <person name="Ivanov K.A."/>
            <person name="Schelle B."/>
            <person name="Bayer S."/>
            <person name="Scheiner B."/>
            <person name="Weinand H."/>
            <person name="Weissbrich B."/>
            <person name="Ziebuhr J."/>
        </authorList>
    </citation>
    <scope>NUCLEOTIDE SEQUENCE [GENOMIC RNA]</scope>
    <source>
        <strain>Isolate Frankfurt 1</strain>
    </source>
</reference>
<reference key="9">
    <citation type="submission" date="2004-01" db="EMBL/GenBank/DDBJ databases">
        <title>Analysis of SARS coronavirus genome in Shanghai isolates.</title>
        <authorList>
            <person name="Yuan Z."/>
            <person name="Zhang X."/>
            <person name="Hu Y."/>
            <person name="Lan S."/>
            <person name="Wang H."/>
            <person name="Zhou Z."/>
            <person name="Wen Y."/>
        </authorList>
    </citation>
    <scope>NUCLEOTIDE SEQUENCE [GENOMIC RNA]</scope>
    <source>
        <strain>Isolate Shanghai QXC1</strain>
    </source>
</reference>
<reference key="10">
    <citation type="submission" date="2003-07" db="EMBL/GenBank/DDBJ databases">
        <authorList>
            <person name="Chang J.-G.C."/>
            <person name="Lin T.-H."/>
            <person name="Chen C.-M."/>
            <person name="Lin C.-S."/>
            <person name="Chan W.-L."/>
            <person name="Shih M.-C."/>
        </authorList>
    </citation>
    <scope>NUCLEOTIDE SEQUENCE [GENOMIC RNA]</scope>
    <source>
        <strain>Isolate Taiwan TC1</strain>
        <strain>Isolate Taiwan TC2</strain>
        <strain>Isolate Taiwan TC3</strain>
    </source>
</reference>
<reference key="11">
    <citation type="submission" date="2003-07" db="EMBL/GenBank/DDBJ databases">
        <title>The complete genome of SARS coronavirus TWH.</title>
        <authorList>
            <person name="Shu H.Y."/>
            <person name="Wu K.M."/>
            <person name="Tsai S.F."/>
        </authorList>
    </citation>
    <scope>NUCLEOTIDE SEQUENCE [GENOMIC RNA]</scope>
    <source>
        <strain>Isolate TWH</strain>
        <strain>Isolate TWJ</strain>
        <strain>Isolate TWK</strain>
        <strain>Isolate TWS</strain>
        <strain>Isolate TWY</strain>
    </source>
</reference>
<reference key="12">
    <citation type="submission" date="2003-07" db="EMBL/GenBank/DDBJ databases">
        <authorList>
            <person name="Canducci F."/>
            <person name="Clementi M."/>
            <person name="Poli G."/>
            <person name="Vicenzi E."/>
        </authorList>
    </citation>
    <scope>NUCLEOTIDE SEQUENCE [GENOMIC RNA]</scope>
    <source>
        <strain>Isolate HSR 1</strain>
    </source>
</reference>
<reference key="13">
    <citation type="submission" date="2003-10" db="EMBL/GenBank/DDBJ databases">
        <authorList>
            <person name="Balotta C."/>
            <person name="Corvasce S."/>
            <person name="Violin M."/>
            <person name="Galli M."/>
            <person name="Moroni M."/>
            <person name="Vigevani G.M."/>
            <person name="Ruan Y.J."/>
            <person name="Salemi M."/>
        </authorList>
    </citation>
    <scope>NUCLEOTIDE SEQUENCE [GENOMIC RNA]</scope>
    <source>
        <strain>Isolate AS</strain>
    </source>
</reference>
<reference key="14">
    <citation type="journal article" date="2005" name="J. Virol.">
        <title>A severe acute respiratory syndrome-associated coronavirus-specific protein enhances virulence of an attenuated murine coronavirus.</title>
        <authorList>
            <person name="Pewe L."/>
            <person name="Zhou H."/>
            <person name="Netland J."/>
            <person name="Tangudu C."/>
            <person name="Olivares H."/>
            <person name="Shi L."/>
            <person name="Look D."/>
            <person name="Gallagher T."/>
            <person name="Perlman S."/>
        </authorList>
    </citation>
    <scope>SUBCELLULAR LOCATION</scope>
</reference>
<reference key="15">
    <citation type="journal article" date="2005" name="FEBS Lett.">
        <title>The putative protein 6 of the severe acute respiratory syndrome-associated coronavirus: expression and functional characterization.</title>
        <authorList>
            <person name="Geng H."/>
            <person name="Liu Y.-M."/>
            <person name="Chan W.S."/>
            <person name="Lo A.W.-I."/>
            <person name="Au D.M.-Y."/>
            <person name="Waye M.M.-Y."/>
            <person name="Ho Y.-Y."/>
        </authorList>
    </citation>
    <scope>SUBCELLULAR LOCATION</scope>
    <source>
        <strain>Isolate CUHK-W1</strain>
    </source>
</reference>
<reference key="16">
    <citation type="journal article" date="2007" name="J. Virol.">
        <title>Severe acute respiratory syndrome coronavirus protein 6 accelerates murine coronavirus infections.</title>
        <authorList>
            <person name="Tangudu C."/>
            <person name="Olivares H."/>
            <person name="Netland J."/>
            <person name="Perlman S."/>
            <person name="Gallagher T."/>
        </authorList>
    </citation>
    <scope>SUBCELLULAR LOCATION</scope>
</reference>
<reference key="17">
    <citation type="journal article" date="2007" name="Virology">
        <title>The nonstructural protein 8 (nsp8) of the SARS coronavirus interacts with its ORF6 accessory protein.</title>
        <authorList>
            <person name="Kumar P."/>
            <person name="Gunalan V."/>
            <person name="Liu B."/>
            <person name="Chow V.T."/>
            <person name="Druce J."/>
            <person name="Birch C."/>
            <person name="Catton M."/>
            <person name="Fielding B.C."/>
            <person name="Tan Y.J."/>
            <person name="Lal S.K."/>
        </authorList>
    </citation>
    <scope>INTERACTION WITH NSP8</scope>
    <scope>SUBCELLULAR LOCATION</scope>
</reference>
<reference key="18">
    <citation type="journal article" date="2007" name="J. Virol.">
        <title>Severe acute respiratory syndrome coronavirus ORF6 antagonizes STAT1 function by sequestering nuclear import factors on the rough endoplasmic reticulum/Golgi membrane.</title>
        <authorList>
            <person name="Frieman M."/>
            <person name="Yount B."/>
            <person name="Heise M."/>
            <person name="Kopecky-Bromberg S.A."/>
            <person name="Palese P."/>
            <person name="Baric R.S."/>
        </authorList>
    </citation>
    <scope>FUNCTION</scope>
    <scope>INTERACTION WITH HOST KPNA2</scope>
    <scope>SUBCELLULAR LOCATION</scope>
</reference>
<reference key="19">
    <citation type="journal article" date="2011" name="BMC Res. Notes">
        <title>A putative diacidic motif in the SARS-CoV ORF6 protein influences its subcellular localization and suppression of expression of co-transfected expression constructs.</title>
        <authorList>
            <person name="Gunalan V."/>
            <person name="Mirazimi A."/>
            <person name="Tan Y.J."/>
        </authorList>
    </citation>
    <scope>SUBCELLULAR LOCATION</scope>
    <scope>MUTAGENESIS OF 49-TYR--LEU-52 AND 53-ASP--GLU-56</scope>
</reference>
<reference key="20">
    <citation type="journal article" date="2012" name="Virus Res.">
        <title>Severe acute respiratory syndrome coronavirus accessory proteins 6 and 9b interact in vivo.</title>
        <authorList>
            <person name="Calvo E."/>
            <person name="DeDiego M.L."/>
            <person name="Garcia P."/>
            <person name="Lopez J.A."/>
            <person name="Perez-Brena P."/>
            <person name="Falcon A."/>
        </authorList>
    </citation>
    <scope>INTERACTION WITH PROTEIN ORF9B</scope>
    <scope>SUBCELLULAR LOCATION</scope>
</reference>
<reference key="21">
    <citation type="journal article" date="2021" name="MBio">
        <title>SARS-CoV-2 ORF6 Disrupts Bidirectional Nucleocytoplasmic Transport through Interactions with Rae1 and Nup98.</title>
        <authorList>
            <person name="Addetia A."/>
            <person name="Lieberman N.A.P."/>
            <person name="Phung Q."/>
            <person name="Hsiang T.Y."/>
            <person name="Xie H."/>
            <person name="Roychoudhury P."/>
            <person name="Shrestha L."/>
            <person name="Loprieno M.A."/>
            <person name="Huang M.L."/>
            <person name="Gale M. Jr."/>
            <person name="Jerome K.R."/>
            <person name="Greninger A.L."/>
        </authorList>
    </citation>
    <scope>FUNCTION</scope>
    <scope>INTERACTION WITH HUMAN NUP98-RAE1 COMPLEX</scope>
    <scope>MUTAGENESIS OF MET-58 AND 62-TYR-PRO-63</scope>
</reference>
<reference evidence="9" key="22">
    <citation type="journal article" date="2022" name="Front. Mol. Biosci.">
        <title>Molecular mechanism of SARS-CoVs Orf6 targeting the Rae1-Nup98 complex to compete with mRNA nuclear export.</title>
        <authorList>
            <person name="Li T."/>
            <person name="Wen Y."/>
            <person name="Guo H."/>
            <person name="Yang T."/>
            <person name="Yang H."/>
            <person name="Ji X."/>
        </authorList>
    </citation>
    <scope>X-RAY CRYSTALLOGRAPHY (2.49 ANGSTROMS) OF 42-63</scope>
    <scope>INTERACTION WITH HOST RAE1-NUP98</scope>
    <scope>MUTAGENESIS OF MET-58</scope>
</reference>
<keyword id="KW-0002">3D-structure</keyword>
<keyword id="KW-1035">Host cytoplasm</keyword>
<keyword id="KW-1038">Host endoplasmic reticulum</keyword>
<keyword id="KW-1040">Host Golgi apparatus</keyword>
<keyword id="KW-1043">Host membrane</keyword>
<keyword id="KW-0945">Host-virus interaction</keyword>
<keyword id="KW-1090">Inhibition of host innate immune response by virus</keyword>
<keyword id="KW-1114">Inhibition of host interferon signaling pathway by virus</keyword>
<keyword id="KW-1105">Inhibition of host STAT1 by virus</keyword>
<keyword id="KW-0922">Interferon antiviral system evasion</keyword>
<keyword id="KW-0472">Membrane</keyword>
<keyword id="KW-1185">Reference proteome</keyword>
<keyword id="KW-0899">Viral immunoevasion</keyword>
<keyword id="KW-0843">Virulence</keyword>
<dbReference type="EMBL" id="AY278741">
    <property type="protein sequence ID" value="AAP13448.1"/>
    <property type="molecule type" value="Genomic_RNA"/>
</dbReference>
<dbReference type="EMBL" id="AY274119">
    <property type="protein sequence ID" value="AAP41042.1"/>
    <property type="molecule type" value="Genomic_RNA"/>
</dbReference>
<dbReference type="EMBL" id="AY282752">
    <property type="status" value="NOT_ANNOTATED_CDS"/>
    <property type="molecule type" value="Genomic_RNA"/>
</dbReference>
<dbReference type="EMBL" id="AY278554">
    <property type="protein sequence ID" value="AAP13572.1"/>
    <property type="molecule type" value="Genomic_RNA"/>
</dbReference>
<dbReference type="EMBL" id="AY278491">
    <property type="status" value="NOT_ANNOTATED_CDS"/>
    <property type="molecule type" value="Genomic_RNA"/>
</dbReference>
<dbReference type="EMBL" id="AY278487">
    <property type="status" value="NOT_ANNOTATED_CDS"/>
    <property type="molecule type" value="Genomic_RNA"/>
</dbReference>
<dbReference type="EMBL" id="AY278488">
    <property type="protein sequence ID" value="AAP30035.1"/>
    <property type="molecule type" value="Genomic_RNA"/>
</dbReference>
<dbReference type="EMBL" id="AY278489">
    <property type="protein sequence ID" value="AAP51232.1"/>
    <property type="molecule type" value="Genomic_RNA"/>
</dbReference>
<dbReference type="EMBL" id="AY278490">
    <property type="status" value="NOT_ANNOTATED_CDS"/>
    <property type="molecule type" value="Genomic_RNA"/>
</dbReference>
<dbReference type="EMBL" id="AY279354">
    <property type="status" value="NOT_ANNOTATED_CDS"/>
    <property type="molecule type" value="Genomic_RNA"/>
</dbReference>
<dbReference type="EMBL" id="AY291451">
    <property type="protein sequence ID" value="AAP37022.1"/>
    <property type="molecule type" value="Genomic_RNA"/>
</dbReference>
<dbReference type="EMBL" id="AY310120">
    <property type="protein sequence ID" value="AAP50490.1"/>
    <property type="molecule type" value="Genomic_RNA"/>
</dbReference>
<dbReference type="EMBL" id="AY291315">
    <property type="protein sequence ID" value="AAP33702.1"/>
    <property type="molecule type" value="Genomic_RNA"/>
</dbReference>
<dbReference type="EMBL" id="AY463059">
    <property type="protein sequence ID" value="AAR86791.1"/>
    <property type="molecule type" value="Genomic_RNA"/>
</dbReference>
<dbReference type="EMBL" id="AY338174">
    <property type="protein sequence ID" value="AAQ01602.1"/>
    <property type="molecule type" value="Genomic_RNA"/>
</dbReference>
<dbReference type="EMBL" id="AY338175">
    <property type="protein sequence ID" value="AAQ01614.1"/>
    <property type="molecule type" value="Genomic_RNA"/>
</dbReference>
<dbReference type="EMBL" id="AY348314">
    <property type="protein sequence ID" value="AAP97887.1"/>
    <property type="molecule type" value="Genomic_RNA"/>
</dbReference>
<dbReference type="EMBL" id="AP006557">
    <property type="protein sequence ID" value="BAC81353.1"/>
    <property type="molecule type" value="Genomic_RNA"/>
</dbReference>
<dbReference type="EMBL" id="AP006558">
    <property type="protein sequence ID" value="BAC81367.1"/>
    <property type="molecule type" value="Genomic_RNA"/>
</dbReference>
<dbReference type="EMBL" id="AP006559">
    <property type="protein sequence ID" value="BAC81381.1"/>
    <property type="molecule type" value="Genomic_RNA"/>
</dbReference>
<dbReference type="EMBL" id="AP006560">
    <property type="protein sequence ID" value="BAC81395.1"/>
    <property type="molecule type" value="Genomic_RNA"/>
</dbReference>
<dbReference type="EMBL" id="AP006561">
    <property type="protein sequence ID" value="BAC81409.1"/>
    <property type="molecule type" value="Genomic_RNA"/>
</dbReference>
<dbReference type="EMBL" id="AY323977">
    <property type="protein sequence ID" value="AAP72979.1"/>
    <property type="molecule type" value="Genomic_RNA"/>
</dbReference>
<dbReference type="EMBL" id="AY427439">
    <property type="protein sequence ID" value="AAQ94065.1"/>
    <property type="molecule type" value="Genomic_RNA"/>
</dbReference>
<dbReference type="PDB" id="7F90">
    <property type="method" value="X-ray"/>
    <property type="resolution" value="2.39 A"/>
    <property type="chains" value="E/F=1-63"/>
</dbReference>
<dbReference type="PDB" id="7VPG">
    <property type="method" value="X-ray"/>
    <property type="resolution" value="2.49 A"/>
    <property type="chains" value="I/J/K/X=42-63"/>
</dbReference>
<dbReference type="PDBsum" id="7F90"/>
<dbReference type="PDBsum" id="7VPG"/>
<dbReference type="SMR" id="P59634"/>
<dbReference type="BioGRID" id="4383919">
    <property type="interactions" value="29"/>
</dbReference>
<dbReference type="IntAct" id="P59634">
    <property type="interactions" value="13"/>
</dbReference>
<dbReference type="MINT" id="P59634"/>
<dbReference type="OrthoDB" id="40904at10239"/>
<dbReference type="Reactome" id="R-HSA-9692916">
    <property type="pathway name" value="SARS-CoV-1 activates/modulates innate immune responses"/>
</dbReference>
<dbReference type="SIGNOR" id="P59634"/>
<dbReference type="Proteomes" id="UP000000354">
    <property type="component" value="Segment"/>
</dbReference>
<dbReference type="Proteomes" id="UP000103670">
    <property type="component" value="Segment"/>
</dbReference>
<dbReference type="Proteomes" id="UP000109640">
    <property type="component" value="Segment"/>
</dbReference>
<dbReference type="Proteomes" id="UP000116947">
    <property type="component" value="Segment"/>
</dbReference>
<dbReference type="Proteomes" id="UP000121636">
    <property type="component" value="Segment"/>
</dbReference>
<dbReference type="Proteomes" id="UP000131569">
    <property type="component" value="Segment"/>
</dbReference>
<dbReference type="Proteomes" id="UP000131955">
    <property type="component" value="Segment"/>
</dbReference>
<dbReference type="Proteomes" id="UP000137377">
    <property type="component" value="Genome"/>
</dbReference>
<dbReference type="Proteomes" id="UP000138690">
    <property type="component" value="Segment"/>
</dbReference>
<dbReference type="Proteomes" id="UP000143093">
    <property type="component" value="Segment"/>
</dbReference>
<dbReference type="Proteomes" id="UP000145651">
    <property type="component" value="Segment"/>
</dbReference>
<dbReference type="Proteomes" id="UP000146108">
    <property type="component" value="Segment"/>
</dbReference>
<dbReference type="Proteomes" id="UP000146181">
    <property type="component" value="Segment"/>
</dbReference>
<dbReference type="Proteomes" id="UP000146296">
    <property type="component" value="Segment"/>
</dbReference>
<dbReference type="Proteomes" id="UP000148194">
    <property type="component" value="Segment"/>
</dbReference>
<dbReference type="Proteomes" id="UP000153467">
    <property type="component" value="Segment"/>
</dbReference>
<dbReference type="Proteomes" id="UP000160648">
    <property type="component" value="Segment"/>
</dbReference>
<dbReference type="Proteomes" id="UP000164441">
    <property type="component" value="Segment"/>
</dbReference>
<dbReference type="Proteomes" id="UP000172416">
    <property type="component" value="Segment"/>
</dbReference>
<dbReference type="Proteomes" id="UP000180358">
    <property type="component" value="Segment"/>
</dbReference>
<dbReference type="GO" id="GO:0044167">
    <property type="term" value="C:host cell endoplasmic reticulum membrane"/>
    <property type="evidence" value="ECO:0007669"/>
    <property type="project" value="UniProtKB-SubCell"/>
</dbReference>
<dbReference type="GO" id="GO:0044178">
    <property type="term" value="C:host cell Golgi membrane"/>
    <property type="evidence" value="ECO:0007669"/>
    <property type="project" value="UniProtKB-SubCell"/>
</dbReference>
<dbReference type="GO" id="GO:0016020">
    <property type="term" value="C:membrane"/>
    <property type="evidence" value="ECO:0007669"/>
    <property type="project" value="UniProtKB-KW"/>
</dbReference>
<dbReference type="GO" id="GO:0052170">
    <property type="term" value="P:symbiont-mediated suppression of host innate immune response"/>
    <property type="evidence" value="ECO:0007669"/>
    <property type="project" value="UniProtKB-KW"/>
</dbReference>
<dbReference type="GO" id="GO:0039563">
    <property type="term" value="P:symbiont-mediated suppression of host JAK-STAT cascade via inhibition of STAT1 activity"/>
    <property type="evidence" value="ECO:0007669"/>
    <property type="project" value="UniProtKB-KW"/>
</dbReference>
<dbReference type="GO" id="GO:0039502">
    <property type="term" value="P:symbiont-mediated suppression of host type I interferon-mediated signaling pathway"/>
    <property type="evidence" value="ECO:0007669"/>
    <property type="project" value="UniProtKB-KW"/>
</dbReference>
<dbReference type="InterPro" id="IPR022736">
    <property type="entry name" value="NS6_bCoV"/>
</dbReference>
<dbReference type="Pfam" id="PF12133">
    <property type="entry name" value="bCoV_NS6"/>
    <property type="match status" value="1"/>
</dbReference>
<evidence type="ECO:0000269" key="1">
    <source>
    </source>
</evidence>
<evidence type="ECO:0000269" key="2">
    <source>
    </source>
</evidence>
<evidence type="ECO:0000269" key="3">
    <source>
    </source>
</evidence>
<evidence type="ECO:0000269" key="4">
    <source>
    </source>
</evidence>
<evidence type="ECO:0000269" key="5">
    <source>
    </source>
</evidence>
<evidence type="ECO:0000269" key="6">
    <source>
    </source>
</evidence>
<evidence type="ECO:0000269" key="7">
    <source>
    </source>
</evidence>
<evidence type="ECO:0000305" key="8"/>
<evidence type="ECO:0007744" key="9">
    <source>
        <dbReference type="PDB" id="7VPG"/>
    </source>
</evidence>
<feature type="chain" id="PRO_0000106134" description="ORF6 protein">
    <location>
        <begin position="1"/>
        <end position="63"/>
    </location>
</feature>
<feature type="region of interest" description="Critical for disrupting nuclear import" evidence="3">
    <location>
        <begin position="54"/>
        <end position="63"/>
    </location>
</feature>
<feature type="sequence variant" description="In strain: Isolate TWJ.">
    <original>IISSIVRQLFKPLTKKNYSELDDEEPMELDYP</original>
    <variation>NKFNSETII</variation>
    <location>
        <begin position="32"/>
        <end position="63"/>
    </location>
</feature>
<feature type="sequence variant" description="In strain: Isolate GD01, Isolate BJ01, Isolate BJ02, Isolate BJ03 and Isolate BJ04.">
    <original>P</original>
    <variation>L</variation>
    <location>
        <position position="57"/>
    </location>
</feature>
<feature type="mutagenesis site" description="No effect in the suppression of nuclear gene expression." evidence="4">
    <original>YSEL</original>
    <variation>AAAA</variation>
    <location>
        <begin position="49"/>
        <end position="52"/>
    </location>
</feature>
<feature type="mutagenesis site" description="Reduction in the suppression of nuclear gene expression." evidence="4">
    <original>DDEE</original>
    <variation>AAAA</variation>
    <location>
        <begin position="53"/>
        <end position="56"/>
    </location>
</feature>
<feature type="mutagenesis site" description="Decreases down-regulation of protein expression of newly transcribed genes in the host cell. Complete loss of RAE1 binding." evidence="6 7">
    <original>M</original>
    <variation>A</variation>
    <location>
        <position position="58"/>
    </location>
</feature>
<feature type="mutagenesis site" description="Decreases down-regulation of protein expression of newly transcribed genes in the host cell." evidence="6">
    <location>
        <begin position="62"/>
        <end position="63"/>
    </location>
</feature>
<protein>
    <recommendedName>
        <fullName>ORF6 protein</fullName>
        <shortName>ORF6</shortName>
    </recommendedName>
    <alternativeName>
        <fullName>Accessory protein 6</fullName>
    </alternativeName>
    <alternativeName>
        <fullName>Non-structural protein 6</fullName>
        <shortName>ns6</shortName>
    </alternativeName>
    <alternativeName>
        <fullName>Protein X3</fullName>
    </alternativeName>
</protein>
<gene>
    <name type="ORF">6</name>
</gene>
<name>NS6_SARS</name>
<organism>
    <name type="scientific">Severe acute respiratory syndrome coronavirus</name>
    <name type="common">SARS-CoV</name>
    <dbReference type="NCBI Taxonomy" id="694009"/>
    <lineage>
        <taxon>Viruses</taxon>
        <taxon>Riboviria</taxon>
        <taxon>Orthornavirae</taxon>
        <taxon>Pisuviricota</taxon>
        <taxon>Pisoniviricetes</taxon>
        <taxon>Nidovirales</taxon>
        <taxon>Cornidovirineae</taxon>
        <taxon>Coronaviridae</taxon>
        <taxon>Orthocoronavirinae</taxon>
        <taxon>Betacoronavirus</taxon>
        <taxon>Sarbecovirus</taxon>
    </lineage>
</organism>